<keyword id="KW-0963">Cytoplasm</keyword>
<keyword id="KW-0647">Proteasome</keyword>
<feature type="chain" id="PRO_1000021792" description="Proteasome subunit alpha">
    <location>
        <begin position="1"/>
        <end position="259"/>
    </location>
</feature>
<organism>
    <name type="scientific">Methanococcus vannielii (strain ATCC 35089 / DSM 1224 / JCM 13029 / OCM 148 / SB)</name>
    <dbReference type="NCBI Taxonomy" id="406327"/>
    <lineage>
        <taxon>Archaea</taxon>
        <taxon>Methanobacteriati</taxon>
        <taxon>Methanobacteriota</taxon>
        <taxon>Methanomada group</taxon>
        <taxon>Methanococci</taxon>
        <taxon>Methanococcales</taxon>
        <taxon>Methanococcaceae</taxon>
        <taxon>Methanococcus</taxon>
    </lineage>
</organism>
<comment type="function">
    <text evidence="1">Component of the proteasome core, a large protease complex with broad specificity involved in protein degradation.</text>
</comment>
<comment type="activity regulation">
    <text evidence="1">The formation of the proteasomal ATPase PAN-20S proteasome complex, via the docking of the C-termini of PAN into the intersubunit pockets in the alpha-rings, triggers opening of the gate for substrate entry. Interconversion between the open-gate and close-gate conformations leads to a dynamic regulation of the 20S proteasome proteolysis activity.</text>
</comment>
<comment type="subunit">
    <text evidence="1">The 20S proteasome core is composed of 14 alpha and 14 beta subunits that assemble into four stacked heptameric rings, resulting in a barrel-shaped structure. The two inner rings, each composed of seven catalytic beta subunits, are sandwiched by two outer rings, each composed of seven alpha subunits. The catalytic chamber with the active sites is on the inside of the barrel. Has a gated structure, the ends of the cylinder being occluded by the N-termini of the alpha-subunits. Is capped at one or both ends by the proteasome regulatory ATPase, PAN.</text>
</comment>
<comment type="subcellular location">
    <subcellularLocation>
        <location evidence="1">Cytoplasm</location>
    </subcellularLocation>
</comment>
<comment type="similarity">
    <text evidence="1">Belongs to the peptidase T1A family.</text>
</comment>
<protein>
    <recommendedName>
        <fullName evidence="1">Proteasome subunit alpha</fullName>
    </recommendedName>
    <alternativeName>
        <fullName evidence="1">20S proteasome alpha subunit</fullName>
    </alternativeName>
    <alternativeName>
        <fullName evidence="1">Proteasome core protein PsmA</fullName>
    </alternativeName>
</protein>
<gene>
    <name evidence="1" type="primary">psmA</name>
    <name type="ordered locus">Mevan_1264</name>
</gene>
<dbReference type="EMBL" id="CP000742">
    <property type="protein sequence ID" value="ABR55161.1"/>
    <property type="molecule type" value="Genomic_DNA"/>
</dbReference>
<dbReference type="RefSeq" id="WP_012066076.1">
    <property type="nucleotide sequence ID" value="NC_009634.1"/>
</dbReference>
<dbReference type="SMR" id="A6URN9"/>
<dbReference type="STRING" id="406327.Mevan_1264"/>
<dbReference type="GeneID" id="5325241"/>
<dbReference type="KEGG" id="mvn:Mevan_1264"/>
<dbReference type="eggNOG" id="arCOG00971">
    <property type="taxonomic scope" value="Archaea"/>
</dbReference>
<dbReference type="HOGENOM" id="CLU_035750_4_1_2"/>
<dbReference type="OrthoDB" id="9421at2157"/>
<dbReference type="Proteomes" id="UP000001107">
    <property type="component" value="Chromosome"/>
</dbReference>
<dbReference type="GO" id="GO:0005737">
    <property type="term" value="C:cytoplasm"/>
    <property type="evidence" value="ECO:0007669"/>
    <property type="project" value="UniProtKB-SubCell"/>
</dbReference>
<dbReference type="GO" id="GO:0019773">
    <property type="term" value="C:proteasome core complex, alpha-subunit complex"/>
    <property type="evidence" value="ECO:0000250"/>
    <property type="project" value="UniProtKB"/>
</dbReference>
<dbReference type="GO" id="GO:0004298">
    <property type="term" value="F:threonine-type endopeptidase activity"/>
    <property type="evidence" value="ECO:0007669"/>
    <property type="project" value="InterPro"/>
</dbReference>
<dbReference type="GO" id="GO:0010498">
    <property type="term" value="P:proteasomal protein catabolic process"/>
    <property type="evidence" value="ECO:0007669"/>
    <property type="project" value="UniProtKB-UniRule"/>
</dbReference>
<dbReference type="GO" id="GO:0006511">
    <property type="term" value="P:ubiquitin-dependent protein catabolic process"/>
    <property type="evidence" value="ECO:0007669"/>
    <property type="project" value="InterPro"/>
</dbReference>
<dbReference type="CDD" id="cd03756">
    <property type="entry name" value="proteasome_alpha_archeal"/>
    <property type="match status" value="1"/>
</dbReference>
<dbReference type="FunFam" id="3.60.20.10:FF:000004">
    <property type="entry name" value="Proteasome subunit alpha type-4"/>
    <property type="match status" value="1"/>
</dbReference>
<dbReference type="Gene3D" id="3.60.20.10">
    <property type="entry name" value="Glutamine Phosphoribosylpyrophosphate, subunit 1, domain 1"/>
    <property type="match status" value="1"/>
</dbReference>
<dbReference type="HAMAP" id="MF_00289_A">
    <property type="entry name" value="Proteasome_A_A"/>
    <property type="match status" value="1"/>
</dbReference>
<dbReference type="InterPro" id="IPR029055">
    <property type="entry name" value="Ntn_hydrolases_N"/>
</dbReference>
<dbReference type="InterPro" id="IPR050115">
    <property type="entry name" value="Proteasome_alpha"/>
</dbReference>
<dbReference type="InterPro" id="IPR023332">
    <property type="entry name" value="Proteasome_alpha-type"/>
</dbReference>
<dbReference type="InterPro" id="IPR019982">
    <property type="entry name" value="Proteasome_asu_arc"/>
</dbReference>
<dbReference type="InterPro" id="IPR000426">
    <property type="entry name" value="Proteasome_asu_N"/>
</dbReference>
<dbReference type="InterPro" id="IPR001353">
    <property type="entry name" value="Proteasome_sua/b"/>
</dbReference>
<dbReference type="NCBIfam" id="TIGR03633">
    <property type="entry name" value="arc_protsome_A"/>
    <property type="match status" value="1"/>
</dbReference>
<dbReference type="NCBIfam" id="NF003075">
    <property type="entry name" value="PRK03996.1"/>
    <property type="match status" value="1"/>
</dbReference>
<dbReference type="PANTHER" id="PTHR11599">
    <property type="entry name" value="PROTEASOME SUBUNIT ALPHA/BETA"/>
    <property type="match status" value="1"/>
</dbReference>
<dbReference type="Pfam" id="PF00227">
    <property type="entry name" value="Proteasome"/>
    <property type="match status" value="1"/>
</dbReference>
<dbReference type="Pfam" id="PF10584">
    <property type="entry name" value="Proteasome_A_N"/>
    <property type="match status" value="1"/>
</dbReference>
<dbReference type="SMART" id="SM00948">
    <property type="entry name" value="Proteasome_A_N"/>
    <property type="match status" value="1"/>
</dbReference>
<dbReference type="SUPFAM" id="SSF56235">
    <property type="entry name" value="N-terminal nucleophile aminohydrolases (Ntn hydrolases)"/>
    <property type="match status" value="1"/>
</dbReference>
<dbReference type="PROSITE" id="PS00388">
    <property type="entry name" value="PROTEASOME_ALPHA_1"/>
    <property type="match status" value="1"/>
</dbReference>
<dbReference type="PROSITE" id="PS51475">
    <property type="entry name" value="PROTEASOME_ALPHA_2"/>
    <property type="match status" value="1"/>
</dbReference>
<evidence type="ECO:0000255" key="1">
    <source>
        <dbReference type="HAMAP-Rule" id="MF_00289"/>
    </source>
</evidence>
<sequence>MQQMVPASGYDRAITIFSPEGRLYQVEYAREAVRRGTTAVGIKCKDGVVLAVDRRITSKLIDVSSIEKIFQIDDHIVAATSGLVADARVLIDRARVEAQVNRISYGEAITVEALAKKICDIKQAYTHHGGARPFGLALLITGIDRHSARLFETDPSGALIEYKATAIGSGRPVAMEILEEKYDENMSVSEGMELAIYALSKTTEELKPENIDMAIVKDTGKLVEKITVFEIEKIVKKVYDKIKVENEEAEKKKATENIE</sequence>
<proteinExistence type="inferred from homology"/>
<accession>A6URN9</accession>
<reference key="1">
    <citation type="submission" date="2007-06" db="EMBL/GenBank/DDBJ databases">
        <title>Complete sequence of Methanococcus vannielii SB.</title>
        <authorList>
            <consortium name="US DOE Joint Genome Institute"/>
            <person name="Copeland A."/>
            <person name="Lucas S."/>
            <person name="Lapidus A."/>
            <person name="Barry K."/>
            <person name="Glavina del Rio T."/>
            <person name="Dalin E."/>
            <person name="Tice H."/>
            <person name="Pitluck S."/>
            <person name="Chain P."/>
            <person name="Malfatti S."/>
            <person name="Shin M."/>
            <person name="Vergez L."/>
            <person name="Schmutz J."/>
            <person name="Larimer F."/>
            <person name="Land M."/>
            <person name="Hauser L."/>
            <person name="Kyrpides N."/>
            <person name="Anderson I."/>
            <person name="Sieprawska-Lupa M."/>
            <person name="Whitman W.B."/>
            <person name="Richardson P."/>
        </authorList>
    </citation>
    <scope>NUCLEOTIDE SEQUENCE [LARGE SCALE GENOMIC DNA]</scope>
    <source>
        <strain>ATCC 35089 / DSM 1224 / JCM 13029 / OCM 148 / SB</strain>
    </source>
</reference>
<name>PSA_METVS</name>